<dbReference type="EC" id="4.2.3.-" evidence="5"/>
<dbReference type="EC" id="4.2.3.15" evidence="5"/>
<dbReference type="EC" id="4.2.3.106" evidence="5"/>
<dbReference type="EMBL" id="HE985294">
    <property type="protein sequence ID" value="CCM43929.1"/>
    <property type="molecule type" value="mRNA"/>
</dbReference>
<dbReference type="SMR" id="R4YZC3"/>
<dbReference type="OrthoDB" id="1936865at2759"/>
<dbReference type="UniPathway" id="UPA00213"/>
<dbReference type="Proteomes" id="UP000515148">
    <property type="component" value="Unplaced"/>
</dbReference>
<dbReference type="GO" id="GO:0009507">
    <property type="term" value="C:chloroplast"/>
    <property type="evidence" value="ECO:0007669"/>
    <property type="project" value="UniProtKB-SubCell"/>
</dbReference>
<dbReference type="GO" id="GO:0000287">
    <property type="term" value="F:magnesium ion binding"/>
    <property type="evidence" value="ECO:0007669"/>
    <property type="project" value="InterPro"/>
</dbReference>
<dbReference type="GO" id="GO:0050551">
    <property type="term" value="F:myrcene synthase activity"/>
    <property type="evidence" value="ECO:0000314"/>
    <property type="project" value="UniProtKB"/>
</dbReference>
<dbReference type="GO" id="GO:0016102">
    <property type="term" value="P:diterpenoid biosynthetic process"/>
    <property type="evidence" value="ECO:0007669"/>
    <property type="project" value="InterPro"/>
</dbReference>
<dbReference type="GO" id="GO:0016098">
    <property type="term" value="P:monoterpenoid metabolic process"/>
    <property type="evidence" value="ECO:0000314"/>
    <property type="project" value="UniProtKB"/>
</dbReference>
<dbReference type="CDD" id="cd00684">
    <property type="entry name" value="Terpene_cyclase_plant_C1"/>
    <property type="match status" value="1"/>
</dbReference>
<dbReference type="FunFam" id="1.10.600.10:FF:000007">
    <property type="entry name" value="Isoprene synthase, chloroplastic"/>
    <property type="match status" value="1"/>
</dbReference>
<dbReference type="FunFam" id="1.50.10.130:FF:000001">
    <property type="entry name" value="Isoprene synthase, chloroplastic"/>
    <property type="match status" value="1"/>
</dbReference>
<dbReference type="Gene3D" id="1.10.600.10">
    <property type="entry name" value="Farnesyl Diphosphate Synthase"/>
    <property type="match status" value="1"/>
</dbReference>
<dbReference type="Gene3D" id="1.50.10.130">
    <property type="entry name" value="Terpene synthase, N-terminal domain"/>
    <property type="match status" value="1"/>
</dbReference>
<dbReference type="InterPro" id="IPR008949">
    <property type="entry name" value="Isoprenoid_synthase_dom_sf"/>
</dbReference>
<dbReference type="InterPro" id="IPR034741">
    <property type="entry name" value="Terpene_cyclase-like_1_C"/>
</dbReference>
<dbReference type="InterPro" id="IPR044814">
    <property type="entry name" value="Terpene_cyclase_plant_C1"/>
</dbReference>
<dbReference type="InterPro" id="IPR001906">
    <property type="entry name" value="Terpene_synth_N"/>
</dbReference>
<dbReference type="InterPro" id="IPR036965">
    <property type="entry name" value="Terpene_synth_N_sf"/>
</dbReference>
<dbReference type="InterPro" id="IPR050148">
    <property type="entry name" value="Terpene_synthase-like"/>
</dbReference>
<dbReference type="InterPro" id="IPR005630">
    <property type="entry name" value="Terpene_synthase_metal-bd"/>
</dbReference>
<dbReference type="InterPro" id="IPR008930">
    <property type="entry name" value="Terpenoid_cyclase/PrenylTrfase"/>
</dbReference>
<dbReference type="PANTHER" id="PTHR31225">
    <property type="entry name" value="OS04G0344100 PROTEIN-RELATED"/>
    <property type="match status" value="1"/>
</dbReference>
<dbReference type="PANTHER" id="PTHR31225:SF9">
    <property type="entry name" value="TERPENE SYNTHASE 10"/>
    <property type="match status" value="1"/>
</dbReference>
<dbReference type="Pfam" id="PF01397">
    <property type="entry name" value="Terpene_synth"/>
    <property type="match status" value="1"/>
</dbReference>
<dbReference type="Pfam" id="PF03936">
    <property type="entry name" value="Terpene_synth_C"/>
    <property type="match status" value="1"/>
</dbReference>
<dbReference type="SFLD" id="SFLDS00005">
    <property type="entry name" value="Isoprenoid_Synthase_Type_I"/>
    <property type="match status" value="1"/>
</dbReference>
<dbReference type="SFLD" id="SFLDG01019">
    <property type="entry name" value="Terpene_Cyclase_Like_1_C_Termi"/>
    <property type="match status" value="1"/>
</dbReference>
<dbReference type="SUPFAM" id="SSF48239">
    <property type="entry name" value="Terpenoid cyclases/Protein prenyltransferases"/>
    <property type="match status" value="1"/>
</dbReference>
<dbReference type="SUPFAM" id="SSF48576">
    <property type="entry name" value="Terpenoid synthases"/>
    <property type="match status" value="1"/>
</dbReference>
<gene>
    <name evidence="6" type="primary">TPS3</name>
    <name type="ORF">LOC113713511</name>
    <name type="ORF">LOC113713556</name>
</gene>
<proteinExistence type="evidence at protein level"/>
<feature type="transit peptide" description="Chloroplast" evidence="4">
    <location>
        <begin position="1"/>
        <end position="39"/>
    </location>
</feature>
<feature type="chain" id="PRO_0000455260" description="Linalool synthase TPS3, chloroplastic">
    <location>
        <begin position="40"/>
        <end position="596"/>
    </location>
</feature>
<feature type="short sequence motif" description="DDXXD motif" evidence="7">
    <location>
        <begin position="345"/>
        <end position="349"/>
    </location>
</feature>
<feature type="binding site" evidence="2">
    <location>
        <position position="308"/>
    </location>
    <ligand>
        <name>(2E)-geranyl diphosphate</name>
        <dbReference type="ChEBI" id="CHEBI:58057"/>
    </ligand>
</feature>
<feature type="binding site" evidence="2">
    <location>
        <position position="345"/>
    </location>
    <ligand>
        <name>(2E)-geranyl diphosphate</name>
        <dbReference type="ChEBI" id="CHEBI:58057"/>
    </ligand>
</feature>
<feature type="binding site" evidence="2">
    <location>
        <position position="345"/>
    </location>
    <ligand>
        <name>Mg(2+)</name>
        <dbReference type="ChEBI" id="CHEBI:18420"/>
        <label>1</label>
    </ligand>
</feature>
<feature type="binding site" evidence="2">
    <location>
        <position position="345"/>
    </location>
    <ligand>
        <name>Mg(2+)</name>
        <dbReference type="ChEBI" id="CHEBI:18420"/>
        <label>2</label>
    </ligand>
</feature>
<feature type="binding site" evidence="2">
    <location>
        <position position="349"/>
    </location>
    <ligand>
        <name>(2E)-geranyl diphosphate</name>
        <dbReference type="ChEBI" id="CHEBI:58057"/>
    </ligand>
</feature>
<feature type="binding site" evidence="2">
    <location>
        <position position="349"/>
    </location>
    <ligand>
        <name>Mg(2+)</name>
        <dbReference type="ChEBI" id="CHEBI:18420"/>
        <label>1</label>
    </ligand>
</feature>
<feature type="binding site" evidence="2">
    <location>
        <position position="349"/>
    </location>
    <ligand>
        <name>Mg(2+)</name>
        <dbReference type="ChEBI" id="CHEBI:18420"/>
        <label>2</label>
    </ligand>
</feature>
<feature type="binding site" evidence="2">
    <location>
        <position position="486"/>
    </location>
    <ligand>
        <name>(2E)-geranyl diphosphate</name>
        <dbReference type="ChEBI" id="CHEBI:58057"/>
    </ligand>
</feature>
<feature type="binding site" evidence="2">
    <location>
        <position position="489"/>
    </location>
    <ligand>
        <name>(2E)-geranyl diphosphate</name>
        <dbReference type="ChEBI" id="CHEBI:58057"/>
    </ligand>
</feature>
<feature type="binding site" evidence="2">
    <location>
        <position position="489"/>
    </location>
    <ligand>
        <name>Mg(2+)</name>
        <dbReference type="ChEBI" id="CHEBI:18420"/>
        <label>3</label>
    </ligand>
</feature>
<feature type="binding site" evidence="2">
    <location>
        <position position="493"/>
    </location>
    <ligand>
        <name>Mg(2+)</name>
        <dbReference type="ChEBI" id="CHEBI:18420"/>
        <label>3</label>
    </ligand>
</feature>
<feature type="binding site" evidence="2">
    <location>
        <position position="497"/>
    </location>
    <ligand>
        <name>Mg(2+)</name>
        <dbReference type="ChEBI" id="CHEBI:18420"/>
        <label>3</label>
    </ligand>
</feature>
<organism>
    <name type="scientific">Coffea arabica</name>
    <name type="common">Arabian coffee</name>
    <dbReference type="NCBI Taxonomy" id="13443"/>
    <lineage>
        <taxon>Eukaryota</taxon>
        <taxon>Viridiplantae</taxon>
        <taxon>Streptophyta</taxon>
        <taxon>Embryophyta</taxon>
        <taxon>Tracheophyta</taxon>
        <taxon>Spermatophyta</taxon>
        <taxon>Magnoliopsida</taxon>
        <taxon>eudicotyledons</taxon>
        <taxon>Gunneridae</taxon>
        <taxon>Pentapetalae</taxon>
        <taxon>asterids</taxon>
        <taxon>lamiids</taxon>
        <taxon>Gentianales</taxon>
        <taxon>Rubiaceae</taxon>
        <taxon>Ixoroideae</taxon>
        <taxon>Gardenieae complex</taxon>
        <taxon>Bertiereae - Coffeeae clade</taxon>
        <taxon>Coffeeae</taxon>
        <taxon>Coffea</taxon>
    </lineage>
</organism>
<protein>
    <recommendedName>
        <fullName evidence="6">Linalool synthase TPS3, chloroplastic</fullName>
        <ecNumber evidence="5">4.2.3.-</ecNumber>
    </recommendedName>
    <alternativeName>
        <fullName evidence="6">Cis-ocimene synthase TPS2, chloroplastic</fullName>
        <ecNumber evidence="5">4.2.3.-</ecNumber>
    </alternativeName>
    <alternativeName>
        <fullName evidence="6">Myrcene synthase TPS3, chloroplastic</fullName>
        <ecNumber evidence="5">4.2.3.15</ecNumber>
    </alternativeName>
    <alternativeName>
        <fullName evidence="6">Trans-ocimene synthase TPS2, chloroplastic</fullName>
        <ecNumber evidence="5">4.2.3.106</ecNumber>
    </alternativeName>
</protein>
<evidence type="ECO:0000250" key="1">
    <source>
        <dbReference type="UniProtKB" id="A0A1C9J6A7"/>
    </source>
</evidence>
<evidence type="ECO:0000250" key="2">
    <source>
        <dbReference type="UniProtKB" id="Q40577"/>
    </source>
</evidence>
<evidence type="ECO:0000250" key="3">
    <source>
        <dbReference type="UniProtKB" id="Q6JD73"/>
    </source>
</evidence>
<evidence type="ECO:0000255" key="4"/>
<evidence type="ECO:0000269" key="5">
    <source>
    </source>
</evidence>
<evidence type="ECO:0000303" key="6">
    <source>
    </source>
</evidence>
<evidence type="ECO:0000305" key="7"/>
<accession>R4YZC3</accession>
<comment type="function">
    <text evidence="5">Monoterpene synthase (mono-TPS) involved in the biosynthesis of monoterpenes natural products, constituent of coffee beverage aroma (PubMed:23398891). Catalyzes the conversion of (2E)-geranyl diphosphate (GPP) into linalool and beta-myrcene, and, as minor products, cis-ocimene and trans-ocimene (PubMed:23398891). Not able to use geranylgeranyl pyrophosphate (GGPP) and farnesyl pyrophosphate (FPP) as substrates (PubMed:23398891).</text>
</comment>
<comment type="catalytic activity">
    <reaction evidence="5">
        <text>(2E)-geranyl diphosphate = beta-myrcene + diphosphate</text>
        <dbReference type="Rhea" id="RHEA:16965"/>
        <dbReference type="ChEBI" id="CHEBI:17221"/>
        <dbReference type="ChEBI" id="CHEBI:33019"/>
        <dbReference type="ChEBI" id="CHEBI:58057"/>
        <dbReference type="EC" id="4.2.3.15"/>
    </reaction>
    <physiologicalReaction direction="left-to-right" evidence="5">
        <dbReference type="Rhea" id="RHEA:16966"/>
    </physiologicalReaction>
</comment>
<comment type="catalytic activity">
    <reaction evidence="5">
        <text>(2E)-geranyl diphosphate + H2O = linalool + diphosphate</text>
        <dbReference type="Rhea" id="RHEA:68708"/>
        <dbReference type="ChEBI" id="CHEBI:15377"/>
        <dbReference type="ChEBI" id="CHEBI:17580"/>
        <dbReference type="ChEBI" id="CHEBI:33019"/>
        <dbReference type="ChEBI" id="CHEBI:58057"/>
    </reaction>
    <physiologicalReaction direction="left-to-right" evidence="5">
        <dbReference type="Rhea" id="RHEA:68709"/>
    </physiologicalReaction>
</comment>
<comment type="catalytic activity">
    <reaction evidence="5">
        <text>(2E)-geranyl diphosphate = (Z)-beta-ocimene + diphosphate</text>
        <dbReference type="Rhea" id="RHEA:68824"/>
        <dbReference type="ChEBI" id="CHEBI:33019"/>
        <dbReference type="ChEBI" id="CHEBI:58057"/>
        <dbReference type="ChEBI" id="CHEBI:87574"/>
    </reaction>
    <physiologicalReaction direction="left-to-right" evidence="5">
        <dbReference type="Rhea" id="RHEA:68825"/>
    </physiologicalReaction>
</comment>
<comment type="catalytic activity">
    <reaction evidence="5">
        <text>(2E)-geranyl diphosphate = (E)-beta-ocimene + diphosphate</text>
        <dbReference type="Rhea" id="RHEA:32691"/>
        <dbReference type="ChEBI" id="CHEBI:33019"/>
        <dbReference type="ChEBI" id="CHEBI:58057"/>
        <dbReference type="ChEBI" id="CHEBI:64280"/>
        <dbReference type="EC" id="4.2.3.106"/>
    </reaction>
    <physiologicalReaction direction="left-to-right" evidence="5">
        <dbReference type="Rhea" id="RHEA:32692"/>
    </physiologicalReaction>
</comment>
<comment type="cofactor">
    <cofactor evidence="1">
        <name>Mg(2+)</name>
        <dbReference type="ChEBI" id="CHEBI:18420"/>
    </cofactor>
    <cofactor evidence="1">
        <name>Mn(2+)</name>
        <dbReference type="ChEBI" id="CHEBI:29035"/>
    </cofactor>
    <text evidence="1">Binds 3 Mg(2+) or Mn(2+) ions per subunit.</text>
</comment>
<comment type="pathway">
    <text evidence="5">Secondary metabolite biosynthesis; terpenoid biosynthesis.</text>
</comment>
<comment type="subunit">
    <text evidence="3">Monomer.</text>
</comment>
<comment type="subcellular location">
    <subcellularLocation>
        <location evidence="4">Plastid</location>
        <location evidence="4">Chloroplast</location>
    </subcellularLocation>
</comment>
<comment type="tissue specificity">
    <text evidence="5">Expressed in flowers and fruits.</text>
</comment>
<comment type="developmental stage">
    <text evidence="5">Observed at early stages of flowers and fruits development (PubMed:23398891). Expressed in flowers and drupes at 10 weeks after pollination, and, at low levels, in fruits at 15 weeks of ripening (PubMed:23398891).</text>
</comment>
<comment type="domain">
    <text evidence="7">The Asp-Asp-Xaa-Xaa-Asp/Glu (DDXXD/E) motif is important for the catalytic activity, presumably through binding to Mg(2+).</text>
</comment>
<comment type="similarity">
    <text evidence="7">Belongs to the terpene synthase family. Tpsb subfamily.</text>
</comment>
<name>TPS3_COFAR</name>
<keyword id="KW-0150">Chloroplast</keyword>
<keyword id="KW-0456">Lyase</keyword>
<keyword id="KW-0460">Magnesium</keyword>
<keyword id="KW-0479">Metal-binding</keyword>
<keyword id="KW-0934">Plastid</keyword>
<keyword id="KW-1185">Reference proteome</keyword>
<keyword id="KW-0809">Transit peptide</keyword>
<reference key="1">
    <citation type="journal article" date="2013" name="Phytochemistry">
        <title>Functional characterization of three Coffea arabica L. monoterpene synthases: insights into the enzymatic machinery of coffee aroma.</title>
        <authorList>
            <person name="Del Terra L."/>
            <person name="Lonzarich V."/>
            <person name="Asquini E."/>
            <person name="Navarini L."/>
            <person name="Graziosi G."/>
            <person name="Suggi Liverani F."/>
            <person name="Pallavicini A."/>
        </authorList>
    </citation>
    <scope>NUCLEOTIDE SEQUENCE [MRNA]</scope>
    <scope>FUNCTION</scope>
    <scope>CATALYTIC ACTIVITY</scope>
    <scope>PATHWAY</scope>
    <scope>TISSUE SPECIFICITY</scope>
    <scope>DEVELOPMENTAL STAGE</scope>
    <source>
        <strain>cv. Catuai Red</strain>
        <tissue>Flower</tissue>
        <tissue>Fruit</tissue>
        <tissue>Seed</tissue>
    </source>
</reference>
<reference key="2">
    <citation type="submission" date="2018-10" db="EMBL/GenBank/DDBJ databases">
        <title>The Coffea arabica cultivar Caturra genome provides a strong foundation for breeding and functional genomics studies in coffee.</title>
        <authorList>
            <person name="Zimin A.V."/>
            <person name="Yepes M."/>
            <person name="Maldonado C.E."/>
            <person name="Navarro L."/>
            <person name="Kovaka S."/>
            <person name="Pertea M."/>
            <person name="Gaitan A."/>
            <person name="Aldwinckle H."/>
        </authorList>
    </citation>
    <scope>NUCLEOTIDE SEQUENCE [LARGE SCALE GENOMIC DNA]</scope>
    <source>
        <strain>cv. Caturra red</strain>
    </source>
</reference>
<sequence>MISSLNPLFTTHRSGVIAQQFFASSAAASINSVSSLKIAACSKTKLVDQSPLRQSGNHQLLSSDFNHLQSLKNDYAEEKYKSRCEVLKEQVKMMLDQEMDVVNQLELIDDLQRLGLSYHFGDEITSVLSGIYNRKSMNKMRNQWGLYATCLEFRLLRQHGFDVSQEIFDCFKDEKGDFRPSLCEDSKGMLYLYEASYLESENEESNLEMARRFAAKTLKKNLDEKRVDQDLVALVQHALELPLHWRMMRLEARWFIDIYEERSNRNPILLELAKLDFNIVQAAHQNDLTYTLRWWRSTCLAEKLTFARDMMVENFFWTVGIISDPQRGNGRRILTKVVALITAIDDIYDCYGTLDELEVFTTAVERWDVNSIDQLPDCMKICFLALYNFVNEMAYDALKEQGVNIIPYLRKSWADLCKAYLQEAKWFFSGEVPTLQQYLNNAWISISAPAFLVHAYFCVDYPINKDHLQYLDNYHKIIRCSAMILRLTNDLGTSPESEVLNVGDVPKSIRCYMKETGACEEKAREHLRFLITEAWKQMEEAQTLDSPFSSTFNGIAVNLARMGLCMYQHGDGHGHQNSEPRDRILSLLFEPICCLA</sequence>